<dbReference type="EC" id="6.1.1.20" evidence="1"/>
<dbReference type="EMBL" id="CP000682">
    <property type="protein sequence ID" value="ABP96262.1"/>
    <property type="molecule type" value="Genomic_DNA"/>
</dbReference>
<dbReference type="RefSeq" id="WP_012022049.1">
    <property type="nucleotide sequence ID" value="NC_009440.1"/>
</dbReference>
<dbReference type="SMR" id="A4YIL0"/>
<dbReference type="STRING" id="399549.Msed_2123"/>
<dbReference type="GeneID" id="91756660"/>
<dbReference type="KEGG" id="mse:Msed_2123"/>
<dbReference type="eggNOG" id="arCOG00412">
    <property type="taxonomic scope" value="Archaea"/>
</dbReference>
<dbReference type="HOGENOM" id="CLU_020279_3_0_2"/>
<dbReference type="Proteomes" id="UP000000242">
    <property type="component" value="Chromosome"/>
</dbReference>
<dbReference type="GO" id="GO:0009328">
    <property type="term" value="C:phenylalanine-tRNA ligase complex"/>
    <property type="evidence" value="ECO:0007669"/>
    <property type="project" value="TreeGrafter"/>
</dbReference>
<dbReference type="GO" id="GO:0005524">
    <property type="term" value="F:ATP binding"/>
    <property type="evidence" value="ECO:0007669"/>
    <property type="project" value="UniProtKB-UniRule"/>
</dbReference>
<dbReference type="GO" id="GO:0000287">
    <property type="term" value="F:magnesium ion binding"/>
    <property type="evidence" value="ECO:0007669"/>
    <property type="project" value="InterPro"/>
</dbReference>
<dbReference type="GO" id="GO:0004826">
    <property type="term" value="F:phenylalanine-tRNA ligase activity"/>
    <property type="evidence" value="ECO:0007669"/>
    <property type="project" value="UniProtKB-UniRule"/>
</dbReference>
<dbReference type="GO" id="GO:0003723">
    <property type="term" value="F:RNA binding"/>
    <property type="evidence" value="ECO:0007669"/>
    <property type="project" value="InterPro"/>
</dbReference>
<dbReference type="GO" id="GO:0006432">
    <property type="term" value="P:phenylalanyl-tRNA aminoacylation"/>
    <property type="evidence" value="ECO:0007669"/>
    <property type="project" value="UniProtKB-UniRule"/>
</dbReference>
<dbReference type="CDD" id="cd00769">
    <property type="entry name" value="PheRS_beta_core"/>
    <property type="match status" value="1"/>
</dbReference>
<dbReference type="Gene3D" id="3.30.56.10">
    <property type="match status" value="2"/>
</dbReference>
<dbReference type="Gene3D" id="3.30.930.10">
    <property type="entry name" value="Bira Bifunctional Protein, Domain 2"/>
    <property type="match status" value="1"/>
</dbReference>
<dbReference type="Gene3D" id="3.50.40.10">
    <property type="entry name" value="Phenylalanyl-trna Synthetase, Chain B, domain 3"/>
    <property type="match status" value="1"/>
</dbReference>
<dbReference type="HAMAP" id="MF_00284">
    <property type="entry name" value="Phe_tRNA_synth_beta2"/>
    <property type="match status" value="1"/>
</dbReference>
<dbReference type="InterPro" id="IPR045864">
    <property type="entry name" value="aa-tRNA-synth_II/BPL/LPL"/>
</dbReference>
<dbReference type="InterPro" id="IPR005146">
    <property type="entry name" value="B3/B4_tRNA-bd"/>
</dbReference>
<dbReference type="InterPro" id="IPR009061">
    <property type="entry name" value="DNA-bd_dom_put_sf"/>
</dbReference>
<dbReference type="InterPro" id="IPR045060">
    <property type="entry name" value="Phe-tRNA-ligase_IIc_bsu"/>
</dbReference>
<dbReference type="InterPro" id="IPR004531">
    <property type="entry name" value="Phe-tRNA-synth_IIc_bsu_arc_euk"/>
</dbReference>
<dbReference type="InterPro" id="IPR020825">
    <property type="entry name" value="Phe-tRNA_synthase-like_B3/B4"/>
</dbReference>
<dbReference type="InterPro" id="IPR022918">
    <property type="entry name" value="Phe_tRNA_ligase_beta2_arc"/>
</dbReference>
<dbReference type="InterPro" id="IPR041616">
    <property type="entry name" value="PheRS_beta_core"/>
</dbReference>
<dbReference type="InterPro" id="IPR005147">
    <property type="entry name" value="tRNA_synthase_B5-dom"/>
</dbReference>
<dbReference type="NCBIfam" id="TIGR00471">
    <property type="entry name" value="pheT_arch"/>
    <property type="match status" value="1"/>
</dbReference>
<dbReference type="PANTHER" id="PTHR10947:SF0">
    <property type="entry name" value="PHENYLALANINE--TRNA LIGASE BETA SUBUNIT"/>
    <property type="match status" value="1"/>
</dbReference>
<dbReference type="PANTHER" id="PTHR10947">
    <property type="entry name" value="PHENYLALANYL-TRNA SYNTHETASE BETA CHAIN AND LEUCINE-RICH REPEAT-CONTAINING PROTEIN 47"/>
    <property type="match status" value="1"/>
</dbReference>
<dbReference type="Pfam" id="PF03483">
    <property type="entry name" value="B3_4"/>
    <property type="match status" value="1"/>
</dbReference>
<dbReference type="Pfam" id="PF03484">
    <property type="entry name" value="B5"/>
    <property type="match status" value="1"/>
</dbReference>
<dbReference type="Pfam" id="PF17759">
    <property type="entry name" value="tRNA_synthFbeta"/>
    <property type="match status" value="1"/>
</dbReference>
<dbReference type="SMART" id="SM00873">
    <property type="entry name" value="B3_4"/>
    <property type="match status" value="1"/>
</dbReference>
<dbReference type="SMART" id="SM00874">
    <property type="entry name" value="B5"/>
    <property type="match status" value="1"/>
</dbReference>
<dbReference type="SUPFAM" id="SSF55681">
    <property type="entry name" value="Class II aaRS and biotin synthetases"/>
    <property type="match status" value="1"/>
</dbReference>
<dbReference type="SUPFAM" id="SSF46955">
    <property type="entry name" value="Putative DNA-binding domain"/>
    <property type="match status" value="2"/>
</dbReference>
<dbReference type="PROSITE" id="PS51483">
    <property type="entry name" value="B5"/>
    <property type="match status" value="1"/>
</dbReference>
<evidence type="ECO:0000255" key="1">
    <source>
        <dbReference type="HAMAP-Rule" id="MF_00284"/>
    </source>
</evidence>
<gene>
    <name evidence="1" type="primary">pheT</name>
    <name type="ordered locus">Msed_2123</name>
</gene>
<name>SYFB_METS5</name>
<organism>
    <name type="scientific">Metallosphaera sedula (strain ATCC 51363 / DSM 5348 / JCM 9185 / NBRC 15509 / TH2)</name>
    <dbReference type="NCBI Taxonomy" id="399549"/>
    <lineage>
        <taxon>Archaea</taxon>
        <taxon>Thermoproteota</taxon>
        <taxon>Thermoprotei</taxon>
        <taxon>Sulfolobales</taxon>
        <taxon>Sulfolobaceae</taxon>
        <taxon>Metallosphaera</taxon>
    </lineage>
</organism>
<keyword id="KW-0030">Aminoacyl-tRNA synthetase</keyword>
<keyword id="KW-0067">ATP-binding</keyword>
<keyword id="KW-0963">Cytoplasm</keyword>
<keyword id="KW-0436">Ligase</keyword>
<keyword id="KW-0460">Magnesium</keyword>
<keyword id="KW-0479">Metal-binding</keyword>
<keyword id="KW-0547">Nucleotide-binding</keyword>
<keyword id="KW-0648">Protein biosynthesis</keyword>
<keyword id="KW-1185">Reference proteome</keyword>
<proteinExistence type="inferred from homology"/>
<protein>
    <recommendedName>
        <fullName evidence="1">Phenylalanine--tRNA ligase beta subunit</fullName>
        <ecNumber evidence="1">6.1.1.20</ecNumber>
    </recommendedName>
    <alternativeName>
        <fullName evidence="1">Phenylalanyl-tRNA synthetase beta subunit</fullName>
        <shortName evidence="1">PheRS</shortName>
    </alternativeName>
</protein>
<accession>A4YIL0</accession>
<reference key="1">
    <citation type="journal article" date="2008" name="Appl. Environ. Microbiol.">
        <title>The genome sequence of the metal-mobilizing, extremely thermoacidophilic archaeon Metallosphaera sedula provides insights into bioleaching-associated metabolism.</title>
        <authorList>
            <person name="Auernik K.S."/>
            <person name="Maezato Y."/>
            <person name="Blum P.H."/>
            <person name="Kelly R.M."/>
        </authorList>
    </citation>
    <scope>NUCLEOTIDE SEQUENCE [LARGE SCALE GENOMIC DNA]</scope>
    <source>
        <strain>ATCC 51363 / DSM 5348 / JCM 9185 / NBRC 15509 / TH2</strain>
    </source>
</reference>
<feature type="chain" id="PRO_1000071939" description="Phenylalanine--tRNA ligase beta subunit">
    <location>
        <begin position="1"/>
        <end position="540"/>
    </location>
</feature>
<feature type="domain" description="B5" evidence="1">
    <location>
        <begin position="268"/>
        <end position="342"/>
    </location>
</feature>
<feature type="binding site" evidence="1">
    <location>
        <position position="320"/>
    </location>
    <ligand>
        <name>Mg(2+)</name>
        <dbReference type="ChEBI" id="CHEBI:18420"/>
        <note>shared with alpha subunit</note>
    </ligand>
</feature>
<feature type="binding site" evidence="1">
    <location>
        <position position="326"/>
    </location>
    <ligand>
        <name>Mg(2+)</name>
        <dbReference type="ChEBI" id="CHEBI:18420"/>
        <note>shared with alpha subunit</note>
    </ligand>
</feature>
<feature type="binding site" evidence="1">
    <location>
        <position position="329"/>
    </location>
    <ligand>
        <name>Mg(2+)</name>
        <dbReference type="ChEBI" id="CHEBI:18420"/>
        <note>shared with alpha subunit</note>
    </ligand>
</feature>
<feature type="binding site" evidence="1">
    <location>
        <position position="330"/>
    </location>
    <ligand>
        <name>Mg(2+)</name>
        <dbReference type="ChEBI" id="CHEBI:18420"/>
        <note>shared with alpha subunit</note>
    </ligand>
</feature>
<sequence>MPTINLNKWILQDMTGLNEQELVDYLFKLKSEVSPVSQDEYSIEVNADRLDMLSLGGIVRALKGITGKELGEPSYPVKDTDYVLEVEKVASRPYALACVIYNVKLSPDFYLKELIQFQEKLHDTIGRRRKKVAIGIHDLEKVEGKIIRYAPVSLSTTFIPLNQEREMSVRDVLQETPQGKQYGNISVWDSNSPAIMDERGILSVPPVINSDRTKITGNTKSLLIDVTGTNFESVMETMDLLATALAELGGIIGRVKVRGMSVDRSPVLRHTSVPFSLDDVNKRLGIHVSRDEAINLIRMMRMEVETNKDLAVIVPPYRVDIMNYTDVAEDIAMAYGYDRFTLESGRTASRGSLSEKSEIYRKLRTLLVGAGFQEVYTLVLTKSSYQRGEAVNIANPISVEYDSVRNSLLWNSLVFLSNNQHSRFPVRIFEIGDVVNRDDSKDTKYSNSTRLSMAIMDSRVSYEMLQAPLHEVLLNLLGVAPSYRRFESDIFMKGRSAEVVVKGETIGRLGEANPELLRSFGLLYPVLLAELDLDALRRVM</sequence>
<comment type="catalytic activity">
    <reaction evidence="1">
        <text>tRNA(Phe) + L-phenylalanine + ATP = L-phenylalanyl-tRNA(Phe) + AMP + diphosphate + H(+)</text>
        <dbReference type="Rhea" id="RHEA:19413"/>
        <dbReference type="Rhea" id="RHEA-COMP:9668"/>
        <dbReference type="Rhea" id="RHEA-COMP:9699"/>
        <dbReference type="ChEBI" id="CHEBI:15378"/>
        <dbReference type="ChEBI" id="CHEBI:30616"/>
        <dbReference type="ChEBI" id="CHEBI:33019"/>
        <dbReference type="ChEBI" id="CHEBI:58095"/>
        <dbReference type="ChEBI" id="CHEBI:78442"/>
        <dbReference type="ChEBI" id="CHEBI:78531"/>
        <dbReference type="ChEBI" id="CHEBI:456215"/>
        <dbReference type="EC" id="6.1.1.20"/>
    </reaction>
</comment>
<comment type="cofactor">
    <cofactor evidence="1">
        <name>Mg(2+)</name>
        <dbReference type="ChEBI" id="CHEBI:18420"/>
    </cofactor>
</comment>
<comment type="subunit">
    <text evidence="1">Tetramer of two alpha and two beta subunits.</text>
</comment>
<comment type="subcellular location">
    <subcellularLocation>
        <location evidence="1">Cytoplasm</location>
    </subcellularLocation>
</comment>
<comment type="similarity">
    <text evidence="1">Belongs to the phenylalanyl-tRNA synthetase beta subunit family. Type 2 subfamily.</text>
</comment>